<proteinExistence type="inferred from homology"/>
<feature type="chain" id="PRO_0000362233" description="ATP synthase subunit a">
    <location>
        <begin position="1"/>
        <end position="406"/>
    </location>
</feature>
<feature type="transmembrane region" description="Helical" evidence="1">
    <location>
        <begin position="151"/>
        <end position="171"/>
    </location>
</feature>
<feature type="transmembrane region" description="Helical" evidence="1">
    <location>
        <begin position="209"/>
        <end position="229"/>
    </location>
</feature>
<feature type="transmembrane region" description="Helical" evidence="1">
    <location>
        <begin position="232"/>
        <end position="252"/>
    </location>
</feature>
<feature type="transmembrane region" description="Helical" evidence="1">
    <location>
        <begin position="278"/>
        <end position="298"/>
    </location>
</feature>
<feature type="transmembrane region" description="Helical" evidence="1">
    <location>
        <begin position="304"/>
        <end position="324"/>
    </location>
</feature>
<feature type="transmembrane region" description="Helical" evidence="1">
    <location>
        <begin position="351"/>
        <end position="371"/>
    </location>
</feature>
<feature type="region of interest" description="Disordered" evidence="2">
    <location>
        <begin position="22"/>
        <end position="76"/>
    </location>
</feature>
<feature type="region of interest" description="Disordered" evidence="2">
    <location>
        <begin position="375"/>
        <end position="406"/>
    </location>
</feature>
<feature type="compositionally biased region" description="Low complexity" evidence="2">
    <location>
        <begin position="22"/>
        <end position="31"/>
    </location>
</feature>
<feature type="compositionally biased region" description="Low complexity" evidence="2">
    <location>
        <begin position="43"/>
        <end position="59"/>
    </location>
</feature>
<feature type="compositionally biased region" description="Low complexity" evidence="2">
    <location>
        <begin position="383"/>
        <end position="406"/>
    </location>
</feature>
<protein>
    <recommendedName>
        <fullName evidence="1">ATP synthase subunit a</fullName>
    </recommendedName>
    <alternativeName>
        <fullName evidence="1">ATP synthase F0 sector subunit a</fullName>
    </alternativeName>
    <alternativeName>
        <fullName evidence="1">F-ATPase subunit 6</fullName>
    </alternativeName>
</protein>
<name>ATP6_ANADF</name>
<dbReference type="EMBL" id="CP000769">
    <property type="protein sequence ID" value="ABS28665.1"/>
    <property type="molecule type" value="Genomic_DNA"/>
</dbReference>
<dbReference type="RefSeq" id="WP_012099315.1">
    <property type="nucleotide sequence ID" value="NC_009675.1"/>
</dbReference>
<dbReference type="SMR" id="A7HIW9"/>
<dbReference type="STRING" id="404589.Anae109_4487"/>
<dbReference type="KEGG" id="afw:Anae109_4487"/>
<dbReference type="eggNOG" id="COG0356">
    <property type="taxonomic scope" value="Bacteria"/>
</dbReference>
<dbReference type="HOGENOM" id="CLU_041018_0_0_7"/>
<dbReference type="OrthoDB" id="9809130at2"/>
<dbReference type="Proteomes" id="UP000006382">
    <property type="component" value="Chromosome"/>
</dbReference>
<dbReference type="GO" id="GO:0005886">
    <property type="term" value="C:plasma membrane"/>
    <property type="evidence" value="ECO:0007669"/>
    <property type="project" value="UniProtKB-SubCell"/>
</dbReference>
<dbReference type="GO" id="GO:0045259">
    <property type="term" value="C:proton-transporting ATP synthase complex"/>
    <property type="evidence" value="ECO:0007669"/>
    <property type="project" value="UniProtKB-KW"/>
</dbReference>
<dbReference type="GO" id="GO:0046933">
    <property type="term" value="F:proton-transporting ATP synthase activity, rotational mechanism"/>
    <property type="evidence" value="ECO:0007669"/>
    <property type="project" value="UniProtKB-UniRule"/>
</dbReference>
<dbReference type="CDD" id="cd00310">
    <property type="entry name" value="ATP-synt_Fo_a_6"/>
    <property type="match status" value="1"/>
</dbReference>
<dbReference type="Gene3D" id="1.20.120.220">
    <property type="entry name" value="ATP synthase, F0 complex, subunit A"/>
    <property type="match status" value="1"/>
</dbReference>
<dbReference type="HAMAP" id="MF_01393">
    <property type="entry name" value="ATP_synth_a_bact"/>
    <property type="match status" value="1"/>
</dbReference>
<dbReference type="InterPro" id="IPR000568">
    <property type="entry name" value="ATP_synth_F0_asu"/>
</dbReference>
<dbReference type="InterPro" id="IPR023011">
    <property type="entry name" value="ATP_synth_F0_asu_AS"/>
</dbReference>
<dbReference type="InterPro" id="IPR045083">
    <property type="entry name" value="ATP_synth_F0_asu_bact/mt"/>
</dbReference>
<dbReference type="InterPro" id="IPR035908">
    <property type="entry name" value="F0_ATP_A_sf"/>
</dbReference>
<dbReference type="NCBIfam" id="TIGR01131">
    <property type="entry name" value="ATP_synt_6_or_A"/>
    <property type="match status" value="1"/>
</dbReference>
<dbReference type="NCBIfam" id="NF009953">
    <property type="entry name" value="PRK13419.1"/>
    <property type="match status" value="1"/>
</dbReference>
<dbReference type="PANTHER" id="PTHR11410">
    <property type="entry name" value="ATP SYNTHASE SUBUNIT A"/>
    <property type="match status" value="1"/>
</dbReference>
<dbReference type="PANTHER" id="PTHR11410:SF0">
    <property type="entry name" value="ATP SYNTHASE SUBUNIT A"/>
    <property type="match status" value="1"/>
</dbReference>
<dbReference type="Pfam" id="PF00119">
    <property type="entry name" value="ATP-synt_A"/>
    <property type="match status" value="1"/>
</dbReference>
<dbReference type="PRINTS" id="PR00123">
    <property type="entry name" value="ATPASEA"/>
</dbReference>
<dbReference type="SUPFAM" id="SSF81336">
    <property type="entry name" value="F1F0 ATP synthase subunit A"/>
    <property type="match status" value="1"/>
</dbReference>
<dbReference type="PROSITE" id="PS00449">
    <property type="entry name" value="ATPASE_A"/>
    <property type="match status" value="1"/>
</dbReference>
<accession>A7HIW9</accession>
<comment type="function">
    <text evidence="1">Key component of the proton channel; it plays a direct role in the translocation of protons across the membrane.</text>
</comment>
<comment type="subunit">
    <text evidence="1">F-type ATPases have 2 components, CF(1) - the catalytic core - and CF(0) - the membrane proton channel. CF(1) has five subunits: alpha(3), beta(3), gamma(1), delta(1), epsilon(1). CF(0) has three main subunits: a(1), b(2) and c(9-12). The alpha and beta chains form an alternating ring which encloses part of the gamma chain. CF(1) is attached to CF(0) by a central stalk formed by the gamma and epsilon chains, while a peripheral stalk is formed by the delta and b chains.</text>
</comment>
<comment type="subcellular location">
    <subcellularLocation>
        <location evidence="1">Cell inner membrane</location>
        <topology evidence="1">Multi-pass membrane protein</topology>
    </subcellularLocation>
</comment>
<comment type="similarity">
    <text evidence="1">Belongs to the ATPase A chain family.</text>
</comment>
<gene>
    <name evidence="1" type="primary">atpB</name>
    <name type="ordered locus">Anae109_4487</name>
</gene>
<reference key="1">
    <citation type="journal article" date="2015" name="Genome Announc.">
        <title>Complete genome sequence of Anaeromyxobacter sp. Fw109-5, an anaerobic, metal-reducing bacterium isolated from a contaminated subsurface environment.</title>
        <authorList>
            <person name="Hwang C."/>
            <person name="Copeland A."/>
            <person name="Lucas S."/>
            <person name="Lapidus A."/>
            <person name="Barry K."/>
            <person name="Glavina Del Rio T."/>
            <person name="Dalin E."/>
            <person name="Tice H."/>
            <person name="Pitluck S."/>
            <person name="Sims D."/>
            <person name="Brettin T."/>
            <person name="Bruce D.C."/>
            <person name="Detter J.C."/>
            <person name="Han C.S."/>
            <person name="Schmutz J."/>
            <person name="Larimer F.W."/>
            <person name="Land M.L."/>
            <person name="Hauser L.J."/>
            <person name="Kyrpides N."/>
            <person name="Lykidis A."/>
            <person name="Richardson P."/>
            <person name="Belieav A."/>
            <person name="Sanford R.A."/>
            <person name="Loeffler F.E."/>
            <person name="Fields M.W."/>
        </authorList>
    </citation>
    <scope>NUCLEOTIDE SEQUENCE [LARGE SCALE GENOMIC DNA]</scope>
    <source>
        <strain>Fw109-5</strain>
    </source>
</reference>
<sequence>MTAASLVTLALSLSLAQAAGHAGEHGAPAPEVATPAEGHGARDAAGAATDPHGAAAEHGAAAHEDPAQHGAAGAEAGHDESLGAVMMHHVADGYVLELPGFCGGLSWACHVDLRDVFGTEHVSEIDAHGHAVERNVSGPLVFGKVDMTPTKHVVMMWIASAILLLVVFAAVRKKSLVPRGLYNFIEMLVQFVRNEIAVKNIGEKDADRFVPYLVSAFFFILFLNLFGLVPFAATATANISVTVMMAVFTFLITQYAQIRAVGVGGYFAHMTGGVPKSLWPLWFIMIPVEFLGLFTKPFALTVRLFANMVAGHFVILALLGLIFALNSQWIAIASVPMALSIYMLELFVAFVQAYIFTMLSSLFIGSVVAHHGHEDEHEEHGHGAAATGGAHGSHGSHVAGASPGHG</sequence>
<evidence type="ECO:0000255" key="1">
    <source>
        <dbReference type="HAMAP-Rule" id="MF_01393"/>
    </source>
</evidence>
<evidence type="ECO:0000256" key="2">
    <source>
        <dbReference type="SAM" id="MobiDB-lite"/>
    </source>
</evidence>
<keyword id="KW-0066">ATP synthesis</keyword>
<keyword id="KW-0997">Cell inner membrane</keyword>
<keyword id="KW-1003">Cell membrane</keyword>
<keyword id="KW-0138">CF(0)</keyword>
<keyword id="KW-0375">Hydrogen ion transport</keyword>
<keyword id="KW-0406">Ion transport</keyword>
<keyword id="KW-0472">Membrane</keyword>
<keyword id="KW-1185">Reference proteome</keyword>
<keyword id="KW-0812">Transmembrane</keyword>
<keyword id="KW-1133">Transmembrane helix</keyword>
<keyword id="KW-0813">Transport</keyword>
<organism>
    <name type="scientific">Anaeromyxobacter sp. (strain Fw109-5)</name>
    <dbReference type="NCBI Taxonomy" id="404589"/>
    <lineage>
        <taxon>Bacteria</taxon>
        <taxon>Pseudomonadati</taxon>
        <taxon>Myxococcota</taxon>
        <taxon>Myxococcia</taxon>
        <taxon>Myxococcales</taxon>
        <taxon>Cystobacterineae</taxon>
        <taxon>Anaeromyxobacteraceae</taxon>
        <taxon>Anaeromyxobacter</taxon>
    </lineage>
</organism>